<evidence type="ECO:0000255" key="1">
    <source>
        <dbReference type="HAMAP-Rule" id="MF_00451"/>
    </source>
</evidence>
<organism>
    <name type="scientific">Aeromonas salmonicida (strain A449)</name>
    <dbReference type="NCBI Taxonomy" id="382245"/>
    <lineage>
        <taxon>Bacteria</taxon>
        <taxon>Pseudomonadati</taxon>
        <taxon>Pseudomonadota</taxon>
        <taxon>Gammaproteobacteria</taxon>
        <taxon>Aeromonadales</taxon>
        <taxon>Aeromonadaceae</taxon>
        <taxon>Aeromonas</taxon>
    </lineage>
</organism>
<reference key="1">
    <citation type="journal article" date="2008" name="BMC Genomics">
        <title>The genome of Aeromonas salmonicida subsp. salmonicida A449: insights into the evolution of a fish pathogen.</title>
        <authorList>
            <person name="Reith M.E."/>
            <person name="Singh R.K."/>
            <person name="Curtis B."/>
            <person name="Boyd J.M."/>
            <person name="Bouevitch A."/>
            <person name="Kimball J."/>
            <person name="Munholland J."/>
            <person name="Murphy C."/>
            <person name="Sarty D."/>
            <person name="Williams J."/>
            <person name="Nash J.H."/>
            <person name="Johnson S.C."/>
            <person name="Brown L.L."/>
        </authorList>
    </citation>
    <scope>NUCLEOTIDE SEQUENCE [LARGE SCALE GENOMIC DNA]</scope>
    <source>
        <strain>A449</strain>
    </source>
</reference>
<comment type="function">
    <text evidence="1">Major role in the synthesis of nucleoside triphosphates other than ATP. The ATP gamma phosphate is transferred to the NDP beta phosphate via a ping-pong mechanism, using a phosphorylated active-site intermediate.</text>
</comment>
<comment type="catalytic activity">
    <reaction evidence="1">
        <text>a 2'-deoxyribonucleoside 5'-diphosphate + ATP = a 2'-deoxyribonucleoside 5'-triphosphate + ADP</text>
        <dbReference type="Rhea" id="RHEA:44640"/>
        <dbReference type="ChEBI" id="CHEBI:30616"/>
        <dbReference type="ChEBI" id="CHEBI:61560"/>
        <dbReference type="ChEBI" id="CHEBI:73316"/>
        <dbReference type="ChEBI" id="CHEBI:456216"/>
        <dbReference type="EC" id="2.7.4.6"/>
    </reaction>
</comment>
<comment type="catalytic activity">
    <reaction evidence="1">
        <text>a ribonucleoside 5'-diphosphate + ATP = a ribonucleoside 5'-triphosphate + ADP</text>
        <dbReference type="Rhea" id="RHEA:18113"/>
        <dbReference type="ChEBI" id="CHEBI:30616"/>
        <dbReference type="ChEBI" id="CHEBI:57930"/>
        <dbReference type="ChEBI" id="CHEBI:61557"/>
        <dbReference type="ChEBI" id="CHEBI:456216"/>
        <dbReference type="EC" id="2.7.4.6"/>
    </reaction>
</comment>
<comment type="cofactor">
    <cofactor evidence="1">
        <name>Mg(2+)</name>
        <dbReference type="ChEBI" id="CHEBI:18420"/>
    </cofactor>
</comment>
<comment type="subunit">
    <text evidence="1">Homotetramer.</text>
</comment>
<comment type="subcellular location">
    <subcellularLocation>
        <location evidence="1">Cytoplasm</location>
    </subcellularLocation>
</comment>
<comment type="similarity">
    <text evidence="1">Belongs to the NDK family.</text>
</comment>
<keyword id="KW-0067">ATP-binding</keyword>
<keyword id="KW-0963">Cytoplasm</keyword>
<keyword id="KW-0418">Kinase</keyword>
<keyword id="KW-0460">Magnesium</keyword>
<keyword id="KW-0479">Metal-binding</keyword>
<keyword id="KW-0546">Nucleotide metabolism</keyword>
<keyword id="KW-0547">Nucleotide-binding</keyword>
<keyword id="KW-0597">Phosphoprotein</keyword>
<keyword id="KW-0808">Transferase</keyword>
<name>NDK_AERS4</name>
<protein>
    <recommendedName>
        <fullName evidence="1">Nucleoside diphosphate kinase</fullName>
        <shortName evidence="1">NDK</shortName>
        <shortName evidence="1">NDP kinase</shortName>
        <ecNumber evidence="1">2.7.4.6</ecNumber>
    </recommendedName>
    <alternativeName>
        <fullName evidence="1">Nucleoside-2-P kinase</fullName>
    </alternativeName>
</protein>
<dbReference type="EC" id="2.7.4.6" evidence="1"/>
<dbReference type="EMBL" id="CP000644">
    <property type="protein sequence ID" value="ABO90627.1"/>
    <property type="molecule type" value="Genomic_DNA"/>
</dbReference>
<dbReference type="RefSeq" id="WP_005310418.1">
    <property type="nucleotide sequence ID" value="NC_009348.1"/>
</dbReference>
<dbReference type="SMR" id="A4SP05"/>
<dbReference type="STRING" id="29491.GCA_000820065_00278"/>
<dbReference type="GeneID" id="79880320"/>
<dbReference type="KEGG" id="asa:ASA_2603"/>
<dbReference type="eggNOG" id="COG0105">
    <property type="taxonomic scope" value="Bacteria"/>
</dbReference>
<dbReference type="HOGENOM" id="CLU_060216_8_1_6"/>
<dbReference type="Proteomes" id="UP000000225">
    <property type="component" value="Chromosome"/>
</dbReference>
<dbReference type="GO" id="GO:0005737">
    <property type="term" value="C:cytoplasm"/>
    <property type="evidence" value="ECO:0007669"/>
    <property type="project" value="UniProtKB-SubCell"/>
</dbReference>
<dbReference type="GO" id="GO:0005524">
    <property type="term" value="F:ATP binding"/>
    <property type="evidence" value="ECO:0007669"/>
    <property type="project" value="UniProtKB-UniRule"/>
</dbReference>
<dbReference type="GO" id="GO:0046872">
    <property type="term" value="F:metal ion binding"/>
    <property type="evidence" value="ECO:0007669"/>
    <property type="project" value="UniProtKB-KW"/>
</dbReference>
<dbReference type="GO" id="GO:0004550">
    <property type="term" value="F:nucleoside diphosphate kinase activity"/>
    <property type="evidence" value="ECO:0007669"/>
    <property type="project" value="UniProtKB-UniRule"/>
</dbReference>
<dbReference type="GO" id="GO:0006241">
    <property type="term" value="P:CTP biosynthetic process"/>
    <property type="evidence" value="ECO:0007669"/>
    <property type="project" value="UniProtKB-UniRule"/>
</dbReference>
<dbReference type="GO" id="GO:0006183">
    <property type="term" value="P:GTP biosynthetic process"/>
    <property type="evidence" value="ECO:0007669"/>
    <property type="project" value="UniProtKB-UniRule"/>
</dbReference>
<dbReference type="GO" id="GO:0006228">
    <property type="term" value="P:UTP biosynthetic process"/>
    <property type="evidence" value="ECO:0007669"/>
    <property type="project" value="UniProtKB-UniRule"/>
</dbReference>
<dbReference type="CDD" id="cd04413">
    <property type="entry name" value="NDPk_I"/>
    <property type="match status" value="1"/>
</dbReference>
<dbReference type="FunFam" id="3.30.70.141:FF:000001">
    <property type="entry name" value="Nucleoside diphosphate kinase"/>
    <property type="match status" value="1"/>
</dbReference>
<dbReference type="Gene3D" id="3.30.70.141">
    <property type="entry name" value="Nucleoside diphosphate kinase-like domain"/>
    <property type="match status" value="1"/>
</dbReference>
<dbReference type="HAMAP" id="MF_00451">
    <property type="entry name" value="NDP_kinase"/>
    <property type="match status" value="1"/>
</dbReference>
<dbReference type="InterPro" id="IPR034907">
    <property type="entry name" value="NDK-like_dom"/>
</dbReference>
<dbReference type="InterPro" id="IPR036850">
    <property type="entry name" value="NDK-like_dom_sf"/>
</dbReference>
<dbReference type="InterPro" id="IPR001564">
    <property type="entry name" value="Nucleoside_diP_kinase"/>
</dbReference>
<dbReference type="InterPro" id="IPR023005">
    <property type="entry name" value="Nucleoside_diP_kinase_AS"/>
</dbReference>
<dbReference type="NCBIfam" id="NF001908">
    <property type="entry name" value="PRK00668.1"/>
    <property type="match status" value="1"/>
</dbReference>
<dbReference type="PANTHER" id="PTHR46161">
    <property type="entry name" value="NUCLEOSIDE DIPHOSPHATE KINASE"/>
    <property type="match status" value="1"/>
</dbReference>
<dbReference type="PANTHER" id="PTHR46161:SF3">
    <property type="entry name" value="NUCLEOSIDE DIPHOSPHATE KINASE DDB_G0292928-RELATED"/>
    <property type="match status" value="1"/>
</dbReference>
<dbReference type="Pfam" id="PF00334">
    <property type="entry name" value="NDK"/>
    <property type="match status" value="1"/>
</dbReference>
<dbReference type="PRINTS" id="PR01243">
    <property type="entry name" value="NUCDPKINASE"/>
</dbReference>
<dbReference type="SMART" id="SM00562">
    <property type="entry name" value="NDK"/>
    <property type="match status" value="1"/>
</dbReference>
<dbReference type="SUPFAM" id="SSF54919">
    <property type="entry name" value="Nucleoside diphosphate kinase, NDK"/>
    <property type="match status" value="1"/>
</dbReference>
<dbReference type="PROSITE" id="PS00469">
    <property type="entry name" value="NDPK"/>
    <property type="match status" value="1"/>
</dbReference>
<dbReference type="PROSITE" id="PS51374">
    <property type="entry name" value="NDPK_LIKE"/>
    <property type="match status" value="1"/>
</dbReference>
<gene>
    <name evidence="1" type="primary">ndk</name>
    <name type="ordered locus">ASA_2603</name>
</gene>
<proteinExistence type="inferred from homology"/>
<feature type="chain" id="PRO_1000026205" description="Nucleoside diphosphate kinase">
    <location>
        <begin position="1"/>
        <end position="142"/>
    </location>
</feature>
<feature type="active site" description="Pros-phosphohistidine intermediate" evidence="1">
    <location>
        <position position="117"/>
    </location>
</feature>
<feature type="binding site" evidence="1">
    <location>
        <position position="11"/>
    </location>
    <ligand>
        <name>ATP</name>
        <dbReference type="ChEBI" id="CHEBI:30616"/>
    </ligand>
</feature>
<feature type="binding site" evidence="1">
    <location>
        <position position="59"/>
    </location>
    <ligand>
        <name>ATP</name>
        <dbReference type="ChEBI" id="CHEBI:30616"/>
    </ligand>
</feature>
<feature type="binding site" evidence="1">
    <location>
        <position position="87"/>
    </location>
    <ligand>
        <name>ATP</name>
        <dbReference type="ChEBI" id="CHEBI:30616"/>
    </ligand>
</feature>
<feature type="binding site" evidence="1">
    <location>
        <position position="93"/>
    </location>
    <ligand>
        <name>ATP</name>
        <dbReference type="ChEBI" id="CHEBI:30616"/>
    </ligand>
</feature>
<feature type="binding site" evidence="1">
    <location>
        <position position="104"/>
    </location>
    <ligand>
        <name>ATP</name>
        <dbReference type="ChEBI" id="CHEBI:30616"/>
    </ligand>
</feature>
<feature type="binding site" evidence="1">
    <location>
        <position position="114"/>
    </location>
    <ligand>
        <name>ATP</name>
        <dbReference type="ChEBI" id="CHEBI:30616"/>
    </ligand>
</feature>
<sequence>MAIERTFSIVKPDAVSKNLIGAIYNRFESAGLKVIAAKMLHMSSEQAAGFYAEHQGKPFYDGLVSFMTSGPVMVQVLEGEDAIRRHREIMGATNPKEALAGTLRACYAESIDRNAVHGSDAPASAAREIAYFFSDDEICPRG</sequence>
<accession>A4SP05</accession>